<protein>
    <recommendedName>
        <fullName>Probable cytochrome c oxidase subunit 2</fullName>
        <ecNumber>7.1.1.9</ecNumber>
    </recommendedName>
    <alternativeName>
        <fullName>Cytochrome aa3 subunit 2</fullName>
    </alternativeName>
    <alternativeName>
        <fullName>Cytochrome c oxidase polypeptide II</fullName>
    </alternativeName>
</protein>
<keyword id="KW-1003">Cell membrane</keyword>
<keyword id="KW-0186">Copper</keyword>
<keyword id="KW-0249">Electron transport</keyword>
<keyword id="KW-0349">Heme</keyword>
<keyword id="KW-0408">Iron</keyword>
<keyword id="KW-0472">Membrane</keyword>
<keyword id="KW-0479">Metal-binding</keyword>
<keyword id="KW-0679">Respiratory chain</keyword>
<keyword id="KW-1278">Translocase</keyword>
<keyword id="KW-0812">Transmembrane</keyword>
<keyword id="KW-1133">Transmembrane helix</keyword>
<keyword id="KW-0813">Transport</keyword>
<name>COX2_RICBR</name>
<evidence type="ECO:0000250" key="1"/>
<evidence type="ECO:0000255" key="2"/>
<evidence type="ECO:0000305" key="3"/>
<proteinExistence type="inferred from homology"/>
<gene>
    <name type="primary">ctaC</name>
    <name type="synonym">coxB</name>
    <name type="ordered locus">RBE_0889</name>
</gene>
<dbReference type="EC" id="7.1.1.9"/>
<dbReference type="EMBL" id="CP000087">
    <property type="protein sequence ID" value="ABE04970.1"/>
    <property type="molecule type" value="Genomic_DNA"/>
</dbReference>
<dbReference type="RefSeq" id="WP_011477555.1">
    <property type="nucleotide sequence ID" value="NC_007940.1"/>
</dbReference>
<dbReference type="SMR" id="Q1RI44"/>
<dbReference type="KEGG" id="rbe:RBE_0889"/>
<dbReference type="eggNOG" id="COG1622">
    <property type="taxonomic scope" value="Bacteria"/>
</dbReference>
<dbReference type="HOGENOM" id="CLU_036876_2_0_5"/>
<dbReference type="OrthoDB" id="9781261at2"/>
<dbReference type="Proteomes" id="UP000001951">
    <property type="component" value="Chromosome"/>
</dbReference>
<dbReference type="GO" id="GO:0005886">
    <property type="term" value="C:plasma membrane"/>
    <property type="evidence" value="ECO:0007669"/>
    <property type="project" value="UniProtKB-SubCell"/>
</dbReference>
<dbReference type="GO" id="GO:0005507">
    <property type="term" value="F:copper ion binding"/>
    <property type="evidence" value="ECO:0007669"/>
    <property type="project" value="InterPro"/>
</dbReference>
<dbReference type="GO" id="GO:0004129">
    <property type="term" value="F:cytochrome-c oxidase activity"/>
    <property type="evidence" value="ECO:0007669"/>
    <property type="project" value="UniProtKB-EC"/>
</dbReference>
<dbReference type="GO" id="GO:0042773">
    <property type="term" value="P:ATP synthesis coupled electron transport"/>
    <property type="evidence" value="ECO:0007669"/>
    <property type="project" value="TreeGrafter"/>
</dbReference>
<dbReference type="CDD" id="cd13912">
    <property type="entry name" value="CcO_II_C"/>
    <property type="match status" value="1"/>
</dbReference>
<dbReference type="FunFam" id="2.60.40.420:FF:000001">
    <property type="entry name" value="Cytochrome c oxidase subunit 2"/>
    <property type="match status" value="1"/>
</dbReference>
<dbReference type="Gene3D" id="1.10.287.90">
    <property type="match status" value="1"/>
</dbReference>
<dbReference type="Gene3D" id="2.60.40.420">
    <property type="entry name" value="Cupredoxins - blue copper proteins"/>
    <property type="match status" value="1"/>
</dbReference>
<dbReference type="InterPro" id="IPR045187">
    <property type="entry name" value="CcO_II"/>
</dbReference>
<dbReference type="InterPro" id="IPR002429">
    <property type="entry name" value="CcO_II-like_C"/>
</dbReference>
<dbReference type="InterPro" id="IPR034210">
    <property type="entry name" value="CcO_II_C"/>
</dbReference>
<dbReference type="InterPro" id="IPR001505">
    <property type="entry name" value="Copper_CuA"/>
</dbReference>
<dbReference type="InterPro" id="IPR008972">
    <property type="entry name" value="Cupredoxin"/>
</dbReference>
<dbReference type="InterPro" id="IPR014222">
    <property type="entry name" value="Cyt_c_oxidase_su2"/>
</dbReference>
<dbReference type="InterPro" id="IPR011759">
    <property type="entry name" value="Cyt_c_oxidase_su2_TM_dom"/>
</dbReference>
<dbReference type="InterPro" id="IPR036257">
    <property type="entry name" value="Cyt_c_oxidase_su2_TM_sf"/>
</dbReference>
<dbReference type="NCBIfam" id="TIGR02866">
    <property type="entry name" value="CoxB"/>
    <property type="match status" value="1"/>
</dbReference>
<dbReference type="PANTHER" id="PTHR22888:SF9">
    <property type="entry name" value="CYTOCHROME C OXIDASE SUBUNIT 2"/>
    <property type="match status" value="1"/>
</dbReference>
<dbReference type="PANTHER" id="PTHR22888">
    <property type="entry name" value="CYTOCHROME C OXIDASE, SUBUNIT II"/>
    <property type="match status" value="1"/>
</dbReference>
<dbReference type="Pfam" id="PF00116">
    <property type="entry name" value="COX2"/>
    <property type="match status" value="1"/>
</dbReference>
<dbReference type="Pfam" id="PF02790">
    <property type="entry name" value="COX2_TM"/>
    <property type="match status" value="1"/>
</dbReference>
<dbReference type="PRINTS" id="PR01166">
    <property type="entry name" value="CYCOXIDASEII"/>
</dbReference>
<dbReference type="SUPFAM" id="SSF49503">
    <property type="entry name" value="Cupredoxins"/>
    <property type="match status" value="1"/>
</dbReference>
<dbReference type="SUPFAM" id="SSF81464">
    <property type="entry name" value="Cytochrome c oxidase subunit II-like, transmembrane region"/>
    <property type="match status" value="1"/>
</dbReference>
<dbReference type="PROSITE" id="PS00078">
    <property type="entry name" value="COX2"/>
    <property type="match status" value="1"/>
</dbReference>
<dbReference type="PROSITE" id="PS50857">
    <property type="entry name" value="COX2_CUA"/>
    <property type="match status" value="1"/>
</dbReference>
<dbReference type="PROSITE" id="PS50999">
    <property type="entry name" value="COX2_TM"/>
    <property type="match status" value="1"/>
</dbReference>
<accession>Q1RI44</accession>
<organism>
    <name type="scientific">Rickettsia bellii (strain RML369-C)</name>
    <dbReference type="NCBI Taxonomy" id="336407"/>
    <lineage>
        <taxon>Bacteria</taxon>
        <taxon>Pseudomonadati</taxon>
        <taxon>Pseudomonadota</taxon>
        <taxon>Alphaproteobacteria</taxon>
        <taxon>Rickettsiales</taxon>
        <taxon>Rickettsiaceae</taxon>
        <taxon>Rickettsieae</taxon>
        <taxon>Rickettsia</taxon>
        <taxon>belli group</taxon>
    </lineage>
</organism>
<reference key="1">
    <citation type="journal article" date="2006" name="PLoS Genet.">
        <title>Genome sequence of Rickettsia bellii illuminates the role of amoebae in gene exchanges between intracellular pathogens.</title>
        <authorList>
            <person name="Ogata H."/>
            <person name="La Scola B."/>
            <person name="Audic S."/>
            <person name="Renesto P."/>
            <person name="Blanc G."/>
            <person name="Robert C."/>
            <person name="Fournier P.-E."/>
            <person name="Claverie J.-M."/>
            <person name="Raoult D."/>
        </authorList>
    </citation>
    <scope>NUCLEOTIDE SEQUENCE [LARGE SCALE GENOMIC DNA]</scope>
    <source>
        <strain>RML369-C</strain>
    </source>
</reference>
<sequence>MYFMKNVITLIGLVLFSSFCFASEPLPWQMGFQPPASPIMEELHKFHDFLLYISTAIVLFVAGLLVFVCIKFNARNNPVPAKFSHNILIEIIWTVIPIIILVIIAVPSFRILRHAEKIPEADLTIKVVGYQWYWHYIYPDHNDIEFDSVMISDENLKPDQKRLLDVDNRIVIPENATVRFLITASDVIHSFAVPSLGFKIDAVPGRVNETWTRVAKKGVYYGQCSELCGINHGFMPIAIEVVSKEDFDNWVASKNKVAANGENSKLAAN</sequence>
<comment type="function">
    <text evidence="1">Subunits I and II form the functional core of the enzyme complex. Electrons originating in cytochrome c are transferred via heme a and Cu(A) to the binuclear center formed by heme a3 and Cu(B) (By similarity).</text>
</comment>
<comment type="catalytic activity">
    <reaction>
        <text>4 Fe(II)-[cytochrome c] + O2 + 8 H(+)(in) = 4 Fe(III)-[cytochrome c] + 2 H2O + 4 H(+)(out)</text>
        <dbReference type="Rhea" id="RHEA:11436"/>
        <dbReference type="Rhea" id="RHEA-COMP:10350"/>
        <dbReference type="Rhea" id="RHEA-COMP:14399"/>
        <dbReference type="ChEBI" id="CHEBI:15377"/>
        <dbReference type="ChEBI" id="CHEBI:15378"/>
        <dbReference type="ChEBI" id="CHEBI:15379"/>
        <dbReference type="ChEBI" id="CHEBI:29033"/>
        <dbReference type="ChEBI" id="CHEBI:29034"/>
        <dbReference type="EC" id="7.1.1.9"/>
    </reaction>
</comment>
<comment type="cofactor">
    <cofactor evidence="1">
        <name>Cu cation</name>
        <dbReference type="ChEBI" id="CHEBI:23378"/>
    </cofactor>
    <text evidence="1">Binds a copper A center.</text>
</comment>
<comment type="cofactor">
    <cofactor evidence="1">
        <name>heme</name>
        <dbReference type="ChEBI" id="CHEBI:30413"/>
    </cofactor>
</comment>
<comment type="subcellular location">
    <subcellularLocation>
        <location evidence="3">Cell membrane</location>
        <topology evidence="3">Multi-pass membrane protein</topology>
    </subcellularLocation>
</comment>
<comment type="similarity">
    <text evidence="3">Belongs to the cytochrome c oxidase subunit 2 family.</text>
</comment>
<feature type="chain" id="PRO_0000280886" description="Probable cytochrome c oxidase subunit 2">
    <location>
        <begin position="1"/>
        <end position="269"/>
    </location>
</feature>
<feature type="transmembrane region" description="Helical" evidence="2">
    <location>
        <begin position="8"/>
        <end position="28"/>
    </location>
</feature>
<feature type="transmembrane region" description="Helical" evidence="2">
    <location>
        <begin position="50"/>
        <end position="70"/>
    </location>
</feature>
<feature type="transmembrane region" description="Helical" evidence="2">
    <location>
        <begin position="87"/>
        <end position="107"/>
    </location>
</feature>
<feature type="binding site" evidence="2">
    <location>
        <position position="189"/>
    </location>
    <ligand>
        <name>Cu cation</name>
        <dbReference type="ChEBI" id="CHEBI:23378"/>
        <label>A</label>
    </ligand>
</feature>
<feature type="binding site" evidence="2">
    <location>
        <position position="224"/>
    </location>
    <ligand>
        <name>Cu cation</name>
        <dbReference type="ChEBI" id="CHEBI:23378"/>
        <label>A</label>
    </ligand>
</feature>
<feature type="binding site" evidence="2">
    <location>
        <position position="228"/>
    </location>
    <ligand>
        <name>Cu cation</name>
        <dbReference type="ChEBI" id="CHEBI:23378"/>
        <label>A</label>
    </ligand>
</feature>
<feature type="binding site" evidence="2">
    <location>
        <position position="232"/>
    </location>
    <ligand>
        <name>Cu cation</name>
        <dbReference type="ChEBI" id="CHEBI:23378"/>
        <label>A</label>
    </ligand>
</feature>